<reference key="1">
    <citation type="book" date="1983" name="Bacteriophage T4">
        <title>Organization and structure of four T4 genes coding for DNA replication proteins.</title>
        <editorList>
            <person name="Mathews C.K."/>
            <person name="Kutter E.M."/>
            <person name="Mosig G."/>
            <person name="Berget P.B."/>
        </editorList>
        <authorList>
            <person name="Spicer E.K."/>
            <person name="Konigsberg W.H."/>
        </authorList>
    </citation>
    <scope>NUCLEOTIDE SEQUENCE [GENOMIC DNA]</scope>
</reference>
<reference key="2">
    <citation type="journal article" date="1989" name="J. Biol. Chem.">
        <title>The 44P subunit of the T4 DNA polymerase accessory protein complex catalyzes ATP hydrolysis.</title>
        <authorList>
            <person name="Rush J."/>
            <person name="Lin T.C."/>
            <person name="Quinones M."/>
            <person name="Spicer E.K."/>
            <person name="Douglas I."/>
            <person name="Williams K.R."/>
            <person name="Konigsberg W.H."/>
        </authorList>
    </citation>
    <scope>NUCLEOTIDE SEQUENCE [GENOMIC DNA]</scope>
</reference>
<reference key="3">
    <citation type="journal article" date="2003" name="Microbiol. Mol. Biol. Rev.">
        <title>Bacteriophage T4 genome.</title>
        <authorList>
            <person name="Miller E.S."/>
            <person name="Kutter E."/>
            <person name="Mosig G."/>
            <person name="Arisaka F."/>
            <person name="Kunisawa T."/>
            <person name="Ruger W."/>
        </authorList>
    </citation>
    <scope>NUCLEOTIDE SEQUENCE [LARGE SCALE GENOMIC DNA]</scope>
</reference>
<reference key="4">
    <citation type="journal article" date="1989" name="J. Biol. Chem.">
        <title>Structural and enzymatic studies of the T4 DNA replication system. I. Physical characterization of the polymerase accessory protein complex.</title>
        <authorList>
            <person name="Jarvis T.C."/>
            <person name="Paul L.S."/>
            <person name="von Hippel P.H."/>
        </authorList>
    </citation>
    <scope>SUBUNIT</scope>
</reference>
<reference key="5">
    <citation type="journal article" date="1999" name="J. Biol. Chem.">
        <title>In vitro reconstitution of the bacteriophage T4 clamp loader complex (gp44/62).</title>
        <authorList>
            <person name="Janzen D.M."/>
            <person name="Torgov M.Y."/>
            <person name="Reddy M.K."/>
        </authorList>
    </citation>
    <scope>SUBUNIT</scope>
    <scope>FUNCTION</scope>
</reference>
<reference key="6">
    <citation type="journal article" date="1997" name="J. Biol. Chem.">
        <title>Structural analyses of gp45 sliding clamp interactions during assembly of the bacteriophage T4 DNA polymerase holoenzyme. II. The Gp44/62 clamp loader interacts with a single defined face of the sliding clamp ring.</title>
        <authorList>
            <person name="Latham G.J."/>
            <person name="Bacheller D.J."/>
            <person name="Pietroni P."/>
            <person name="von Hippel P.H."/>
        </authorList>
    </citation>
    <scope>INTERACTION WITH THE SLIDING CLAMP</scope>
    <scope>FUNCTION</scope>
</reference>
<reference key="7">
    <citation type="journal article" date="2006" name="Biochemistry">
        <title>Single-molecule investigation of the T4 bacteriophage DNA polymerase holoenzyme: multiple pathways of holoenzyme formation.</title>
        <authorList>
            <person name="Smiley R.D."/>
            <person name="Zhuang Z."/>
            <person name="Benkovic S.J."/>
            <person name="Hammes G.G."/>
        </authorList>
    </citation>
    <scope>IDENTIFICATION IN THE REPLICASE COMPLEX</scope>
</reference>
<reference evidence="7 8 9" key="8">
    <citation type="journal article" date="2011" name="Science">
        <title>How a DNA polymerase clamp loader opens a sliding clamp.</title>
        <authorList>
            <person name="Kelch B.A."/>
            <person name="Makino D.L."/>
            <person name="O'Donnell M."/>
            <person name="Kuriyan J."/>
        </authorList>
    </citation>
    <scope>X-RAY CRYSTALLOGRAPHY (3.5 ANGSTROMS) OF 2-187</scope>
    <scope>FUNCTION</scope>
</reference>
<organismHost>
    <name type="scientific">Escherichia coli</name>
    <dbReference type="NCBI Taxonomy" id="562"/>
</organismHost>
<accession>P04527</accession>
<dbReference type="EMBL" id="M10160">
    <property type="protein sequence ID" value="AAC05395.1"/>
    <property type="molecule type" value="Genomic_DNA"/>
</dbReference>
<dbReference type="EMBL" id="X00769">
    <property type="protein sequence ID" value="CAA25342.1"/>
    <property type="molecule type" value="Genomic_DNA"/>
</dbReference>
<dbReference type="EMBL" id="AF158101">
    <property type="protein sequence ID" value="AAD42513.1"/>
    <property type="molecule type" value="Genomic_DNA"/>
</dbReference>
<dbReference type="PIR" id="A04303">
    <property type="entry name" value="IDBPT4"/>
</dbReference>
<dbReference type="RefSeq" id="NP_049664.1">
    <property type="nucleotide sequence ID" value="NC_000866.4"/>
</dbReference>
<dbReference type="PDB" id="3U5Z">
    <property type="method" value="X-ray"/>
    <property type="resolution" value="3.50 A"/>
    <property type="chains" value="A/K=2-187"/>
</dbReference>
<dbReference type="PDB" id="3U60">
    <property type="method" value="X-ray"/>
    <property type="resolution" value="3.34 A"/>
    <property type="chains" value="A=2-187"/>
</dbReference>
<dbReference type="PDB" id="3U61">
    <property type="method" value="X-ray"/>
    <property type="resolution" value="3.20 A"/>
    <property type="chains" value="A=2-187"/>
</dbReference>
<dbReference type="PDB" id="8UH7">
    <property type="method" value="X-ray"/>
    <property type="resolution" value="2.63 A"/>
    <property type="chains" value="A=1-187"/>
</dbReference>
<dbReference type="PDB" id="8UK9">
    <property type="method" value="X-ray"/>
    <property type="resolution" value="3.10 A"/>
    <property type="chains" value="A/Q=1-187"/>
</dbReference>
<dbReference type="PDB" id="8UNF">
    <property type="method" value="EM"/>
    <property type="resolution" value="3.15 A"/>
    <property type="chains" value="A=1-187"/>
</dbReference>
<dbReference type="PDB" id="8UNH">
    <property type="method" value="EM"/>
    <property type="resolution" value="3.21 A"/>
    <property type="chains" value="A=1-187"/>
</dbReference>
<dbReference type="PDBsum" id="3U5Z"/>
<dbReference type="PDBsum" id="3U60"/>
<dbReference type="PDBsum" id="3U61"/>
<dbReference type="PDBsum" id="8UH7"/>
<dbReference type="PDBsum" id="8UK9"/>
<dbReference type="PDBsum" id="8UNF"/>
<dbReference type="PDBsum" id="8UNH"/>
<dbReference type="EMDB" id="EMD-42399"/>
<dbReference type="EMDB" id="EMD-42402"/>
<dbReference type="SMR" id="P04527"/>
<dbReference type="BindingDB" id="P04527"/>
<dbReference type="GeneID" id="1258559"/>
<dbReference type="KEGG" id="vg:1258559"/>
<dbReference type="OrthoDB" id="12022at10239"/>
<dbReference type="EvolutionaryTrace" id="P04527"/>
<dbReference type="Proteomes" id="UP000009087">
    <property type="component" value="Segment"/>
</dbReference>
<dbReference type="GO" id="GO:0003677">
    <property type="term" value="F:DNA binding"/>
    <property type="evidence" value="ECO:0007669"/>
    <property type="project" value="UniProtKB-UniRule"/>
</dbReference>
<dbReference type="GO" id="GO:0003689">
    <property type="term" value="F:DNA clamp loader activity"/>
    <property type="evidence" value="ECO:0000314"/>
    <property type="project" value="UniProtKB"/>
</dbReference>
<dbReference type="GO" id="GO:0039686">
    <property type="term" value="P:bidirectional double-stranded viral DNA replication"/>
    <property type="evidence" value="ECO:0000314"/>
    <property type="project" value="UniProtKB"/>
</dbReference>
<dbReference type="GO" id="GO:0006260">
    <property type="term" value="P:DNA replication"/>
    <property type="evidence" value="ECO:0007669"/>
    <property type="project" value="UniProtKB-KW"/>
</dbReference>
<dbReference type="Gene3D" id="6.10.250.1260">
    <property type="match status" value="1"/>
</dbReference>
<dbReference type="Gene3D" id="1.10.8.700">
    <property type="entry name" value="Bacteriophage clamp loader A subunit, A domain"/>
    <property type="match status" value="1"/>
</dbReference>
<dbReference type="Gene3D" id="1.20.272.50">
    <property type="entry name" value="Bacteriophage clamp loader A subunit, A' domain"/>
    <property type="match status" value="1"/>
</dbReference>
<dbReference type="HAMAP" id="MF_04163">
    <property type="entry name" value="T4_Clamp_Loader_S"/>
    <property type="match status" value="1"/>
</dbReference>
<dbReference type="InterPro" id="IPR031868">
    <property type="entry name" value="Phage_clamp_gp62"/>
</dbReference>
<dbReference type="Pfam" id="PF16790">
    <property type="entry name" value="Phage_clamp_A"/>
    <property type="match status" value="1"/>
</dbReference>
<proteinExistence type="evidence at protein level"/>
<evidence type="ECO:0000255" key="1">
    <source>
        <dbReference type="HAMAP-Rule" id="MF_04163"/>
    </source>
</evidence>
<evidence type="ECO:0000269" key="2">
    <source>
    </source>
</evidence>
<evidence type="ECO:0000269" key="3">
    <source>
    </source>
</evidence>
<evidence type="ECO:0000269" key="4">
    <source>
    </source>
</evidence>
<evidence type="ECO:0000269" key="5">
    <source>
    </source>
</evidence>
<evidence type="ECO:0000305" key="6"/>
<evidence type="ECO:0007744" key="7">
    <source>
        <dbReference type="PDB" id="3U5Z"/>
    </source>
</evidence>
<evidence type="ECO:0007744" key="8">
    <source>
        <dbReference type="PDB" id="3U60"/>
    </source>
</evidence>
<evidence type="ECO:0007744" key="9">
    <source>
        <dbReference type="PDB" id="3U61"/>
    </source>
</evidence>
<evidence type="ECO:0007829" key="10">
    <source>
        <dbReference type="PDB" id="3U60"/>
    </source>
</evidence>
<evidence type="ECO:0007829" key="11">
    <source>
        <dbReference type="PDB" id="3U61"/>
    </source>
</evidence>
<evidence type="ECO:0007829" key="12">
    <source>
        <dbReference type="PDB" id="8UH7"/>
    </source>
</evidence>
<evidence type="ECO:0007829" key="13">
    <source>
        <dbReference type="PDB" id="8UK9"/>
    </source>
</evidence>
<evidence type="ECO:0007829" key="14">
    <source>
        <dbReference type="PDB" id="8UNH"/>
    </source>
</evidence>
<sequence>MSLFKDDIQLNEHQVAWYSKDWTAVQSAADSFKEKAENEFFEIIGAINNKTKCSIAQKDYSKFMVENALSQFPECMPAVYAMNLIGSGLSDEAHFNYLMAAVPRGKRYGKWAKLVEDSTEVLIIKLLAKRYQVNTNDAINYKSILTKNGKLPLVLKELKGLVTDDFLKEVTKNVKEQKQLKKLALEW</sequence>
<keyword id="KW-0002">3D-structure</keyword>
<keyword id="KW-0235">DNA replication</keyword>
<keyword id="KW-0238">DNA-binding</keyword>
<keyword id="KW-1185">Reference proteome</keyword>
<keyword id="KW-1194">Viral DNA replication</keyword>
<organism>
    <name type="scientific">Enterobacteria phage T4</name>
    <name type="common">Bacteriophage T4</name>
    <dbReference type="NCBI Taxonomy" id="10665"/>
    <lineage>
        <taxon>Viruses</taxon>
        <taxon>Duplodnaviria</taxon>
        <taxon>Heunggongvirae</taxon>
        <taxon>Uroviricota</taxon>
        <taxon>Caudoviricetes</taxon>
        <taxon>Straboviridae</taxon>
        <taxon>Tevenvirinae</taxon>
        <taxon>Tequatrovirus</taxon>
    </lineage>
</organism>
<protein>
    <recommendedName>
        <fullName evidence="1">Sliding-clamp-loader small subunit</fullName>
    </recommendedName>
    <alternativeName>
        <fullName evidence="1">Clamp loader gp62 subunit</fullName>
    </alternativeName>
    <alternativeName>
        <fullName>Gene product 62</fullName>
        <shortName>gp62</shortName>
    </alternativeName>
</protein>
<name>LOADS_BPT4</name>
<feature type="chain" id="PRO_0000164929" description="Sliding-clamp-loader small subunit">
    <location>
        <begin position="1"/>
        <end position="187"/>
    </location>
</feature>
<feature type="sequence conflict" description="In Ref. 2; CAA25342." evidence="6" ref="2">
    <original>Q</original>
    <variation>E</variation>
    <location>
        <position position="71"/>
    </location>
</feature>
<feature type="strand" evidence="13">
    <location>
        <begin position="5"/>
        <end position="7"/>
    </location>
</feature>
<feature type="helix" evidence="12">
    <location>
        <begin position="12"/>
        <end position="19"/>
    </location>
</feature>
<feature type="helix" evidence="12">
    <location>
        <begin position="22"/>
        <end position="30"/>
    </location>
</feature>
<feature type="helix" evidence="12">
    <location>
        <begin position="41"/>
        <end position="49"/>
    </location>
</feature>
<feature type="strand" evidence="12">
    <location>
        <begin position="56"/>
        <end position="58"/>
    </location>
</feature>
<feature type="helix" evidence="12">
    <location>
        <begin position="62"/>
        <end position="69"/>
    </location>
</feature>
<feature type="helix" evidence="12">
    <location>
        <begin position="73"/>
        <end position="75"/>
    </location>
</feature>
<feature type="helix" evidence="12">
    <location>
        <begin position="76"/>
        <end position="84"/>
    </location>
</feature>
<feature type="turn" evidence="11">
    <location>
        <begin position="85"/>
        <end position="88"/>
    </location>
</feature>
<feature type="helix" evidence="12">
    <location>
        <begin position="91"/>
        <end position="101"/>
    </location>
</feature>
<feature type="helix" evidence="14">
    <location>
        <begin position="111"/>
        <end position="117"/>
    </location>
</feature>
<feature type="helix" evidence="12">
    <location>
        <begin position="118"/>
        <end position="131"/>
    </location>
</feature>
<feature type="helix" evidence="12">
    <location>
        <begin position="135"/>
        <end position="146"/>
    </location>
</feature>
<feature type="strand" evidence="10">
    <location>
        <begin position="147"/>
        <end position="149"/>
    </location>
</feature>
<feature type="helix" evidence="12">
    <location>
        <begin position="151"/>
        <end position="158"/>
    </location>
</feature>
<feature type="helix" evidence="12">
    <location>
        <begin position="159"/>
        <end position="161"/>
    </location>
</feature>
<feature type="helix" evidence="12">
    <location>
        <begin position="164"/>
        <end position="170"/>
    </location>
</feature>
<feature type="turn" evidence="13">
    <location>
        <begin position="172"/>
        <end position="174"/>
    </location>
</feature>
<feature type="helix" evidence="12">
    <location>
        <begin position="176"/>
        <end position="184"/>
    </location>
</feature>
<comment type="function">
    <text evidence="1 2 4">Forms the sliding-clamp-loader together with the small subunit (PubMed:10585481). The clamp loader holds the clamp in an open conformation and places it onto the DNA (PubMed:22194570).</text>
</comment>
<comment type="subunit">
    <text evidence="1 2 3 4 5">The sliding-clamp-loader consists of 4 large subunits and 1 small subunit (PubMed:10585481, PubMed:2663867). Interacts with the sliding clamp; this interaction allows the sliding-clamp-loader to open the sliding clamp (PubMed:22194570). Part of the replicase complex that includes the DNA polymerase, the polymerase clamp, the clamp loader complex, the single-stranded DNA binding protein, the primase, the helicase and the helicase assembly factor (PubMed:16800624).</text>
</comment>
<comment type="similarity">
    <text evidence="1">Belongs to the Tevenvirinae sliding-clamp-loader small subunit family.</text>
</comment>
<gene>
    <name type="primary">62</name>
</gene>